<proteinExistence type="evidence at protein level"/>
<name>PYCC_GULMO</name>
<comment type="function">
    <text evidence="9">Pycsar (pyrimidine cyclase system for antiphage resistance) provides immunity against bacteriophage. The pyrimidine cyclase (PycC) synthesizes cyclic nucleotides in response to infection; these serve as specific second messenger signals. The signals activate the adjacent effector, leading to bacterial cell death and abortive phage infection. A clade C Pycsar system.</text>
</comment>
<comment type="function">
    <text evidence="5 9">The pyrimidine cyclase gene of a two-gene Pycsar system, weakly generates cyclic UMP (cUMP) from UTP, has little to no activity on ATP, CTP or GTP (PubMed:34644530). Expression of this and adjacent effector GmPycTM (AC P0DV43) probably confers resistance to bacteriophage. The genes are probably only expressed in response to bacteriophage infection (Probable).</text>
</comment>
<comment type="catalytic activity">
    <reaction evidence="5">
        <text>UTP = 3',5'-cyclic UMP + diphosphate</text>
        <dbReference type="Rhea" id="RHEA:69603"/>
        <dbReference type="ChEBI" id="CHEBI:33019"/>
        <dbReference type="ChEBI" id="CHEBI:46398"/>
        <dbReference type="ChEBI" id="CHEBI:184387"/>
        <dbReference type="EC" id="4.6.1.26"/>
    </reaction>
</comment>
<comment type="cofactor">
    <cofactor evidence="2">
        <name>Mn(2+)</name>
        <dbReference type="ChEBI" id="CHEBI:29035"/>
    </cofactor>
</comment>
<comment type="subunit">
    <text evidence="1">Homodimer.</text>
</comment>
<comment type="subcellular location">
    <subcellularLocation>
        <location evidence="8">Cytoplasm</location>
    </subcellularLocation>
</comment>
<comment type="similarity">
    <text evidence="9">Belongs to the adenylyl cyclase class-4/guanylyl cyclase family. Pyrimidine cyclase subfamily.</text>
</comment>
<evidence type="ECO:0000250" key="1">
    <source>
        <dbReference type="UniProtKB" id="A0A0J5ZXG5"/>
    </source>
</evidence>
<evidence type="ECO:0000250" key="2">
    <source>
        <dbReference type="UniProtKB" id="P0DV24"/>
    </source>
</evidence>
<evidence type="ECO:0000250" key="3">
    <source>
        <dbReference type="UniProtKB" id="P0DV40"/>
    </source>
</evidence>
<evidence type="ECO:0000255" key="4">
    <source>
        <dbReference type="PROSITE-ProRule" id="PRU00099"/>
    </source>
</evidence>
<evidence type="ECO:0000269" key="5">
    <source>
    </source>
</evidence>
<evidence type="ECO:0000303" key="6">
    <source>
    </source>
</evidence>
<evidence type="ECO:0000303" key="7">
    <source>
    </source>
</evidence>
<evidence type="ECO:0000305" key="8"/>
<evidence type="ECO:0000305" key="9">
    <source>
    </source>
</evidence>
<dbReference type="EC" id="4.6.1.26" evidence="5"/>
<dbReference type="EMBL" id="LIVN01000053">
    <property type="status" value="NOT_ANNOTATED_CDS"/>
    <property type="molecule type" value="Genomic_DNA"/>
</dbReference>
<dbReference type="SMR" id="P0DV42"/>
<dbReference type="GO" id="GO:0005737">
    <property type="term" value="C:cytoplasm"/>
    <property type="evidence" value="ECO:0007669"/>
    <property type="project" value="UniProtKB-SubCell"/>
</dbReference>
<dbReference type="GO" id="GO:0004016">
    <property type="term" value="F:adenylate cyclase activity"/>
    <property type="evidence" value="ECO:0007669"/>
    <property type="project" value="UniProtKB-ARBA"/>
</dbReference>
<dbReference type="GO" id="GO:0046872">
    <property type="term" value="F:metal ion binding"/>
    <property type="evidence" value="ECO:0007669"/>
    <property type="project" value="UniProtKB-KW"/>
</dbReference>
<dbReference type="GO" id="GO:0000166">
    <property type="term" value="F:nucleotide binding"/>
    <property type="evidence" value="ECO:0007669"/>
    <property type="project" value="UniProtKB-KW"/>
</dbReference>
<dbReference type="GO" id="GO:0009190">
    <property type="term" value="P:cyclic nucleotide biosynthetic process"/>
    <property type="evidence" value="ECO:0007669"/>
    <property type="project" value="InterPro"/>
</dbReference>
<dbReference type="GO" id="GO:0051607">
    <property type="term" value="P:defense response to virus"/>
    <property type="evidence" value="ECO:0007669"/>
    <property type="project" value="UniProtKB-KW"/>
</dbReference>
<dbReference type="GO" id="GO:0035556">
    <property type="term" value="P:intracellular signal transduction"/>
    <property type="evidence" value="ECO:0007669"/>
    <property type="project" value="InterPro"/>
</dbReference>
<dbReference type="CDD" id="cd07302">
    <property type="entry name" value="CHD"/>
    <property type="match status" value="1"/>
</dbReference>
<dbReference type="Gene3D" id="3.30.70.1230">
    <property type="entry name" value="Nucleotide cyclase"/>
    <property type="match status" value="1"/>
</dbReference>
<dbReference type="InterPro" id="IPR001054">
    <property type="entry name" value="A/G_cyclase"/>
</dbReference>
<dbReference type="InterPro" id="IPR029787">
    <property type="entry name" value="Nucleotide_cyclase"/>
</dbReference>
<dbReference type="Pfam" id="PF00211">
    <property type="entry name" value="Guanylate_cyc"/>
    <property type="match status" value="1"/>
</dbReference>
<dbReference type="SUPFAM" id="SSF55073">
    <property type="entry name" value="Nucleotide cyclase"/>
    <property type="match status" value="1"/>
</dbReference>
<dbReference type="PROSITE" id="PS50125">
    <property type="entry name" value="GUANYLATE_CYCLASE_2"/>
    <property type="match status" value="1"/>
</dbReference>
<keyword id="KW-0051">Antiviral defense</keyword>
<keyword id="KW-0963">Cytoplasm</keyword>
<keyword id="KW-0456">Lyase</keyword>
<keyword id="KW-0464">Manganese</keyword>
<keyword id="KW-0479">Metal-binding</keyword>
<keyword id="KW-0547">Nucleotide-binding</keyword>
<gene>
    <name evidence="7" type="primary">pycC</name>
    <name evidence="6" type="ORF">Ga0100804_10533</name>
</gene>
<sequence>MRSSHKSFDFENSLKRIDSILNDSTSYEESDDIPDIDDLTFNNGKYVNCAAIFIDLRGSTDLIKTLGKLSKSLARLYRAYISEMVAIVNSFKTCKEINIVGDCVSAMFAGDIEGAESPVIEALQASSMANAMMNVLNVKYKKKWKDFVELKAGIGVAYGRALVIKAGFSGSGIKDLVYMGDVVNKASKMCGLAYKEYTSHAICVTKEVYENAGKYIANEEKKLTYQDFLTEKNHNTFGSVYVGNFHRVYINNWAEENK</sequence>
<accession>P0DV42</accession>
<organism>
    <name type="scientific">Gulbenkiania mobilis</name>
    <dbReference type="NCBI Taxonomy" id="397457"/>
    <lineage>
        <taxon>Bacteria</taxon>
        <taxon>Pseudomonadati</taxon>
        <taxon>Pseudomonadota</taxon>
        <taxon>Betaproteobacteria</taxon>
        <taxon>Neisseriales</taxon>
        <taxon>Chromobacteriaceae</taxon>
        <taxon>Gulbenkiania</taxon>
    </lineage>
</organism>
<feature type="chain" id="PRO_0000455222" description="Uridylate cyclase">
    <location>
        <begin position="1"/>
        <end position="258"/>
    </location>
</feature>
<feature type="domain" description="Guanylate cyclase" evidence="4">
    <location>
        <begin position="50"/>
        <end position="190"/>
    </location>
</feature>
<feature type="binding site" evidence="3 9">
    <location>
        <position position="53"/>
    </location>
    <ligand>
        <name>a ribonucleoside 5'-triphosphate</name>
        <dbReference type="ChEBI" id="CHEBI:61557"/>
    </ligand>
</feature>
<feature type="binding site" evidence="9">
    <location>
        <position position="55"/>
    </location>
    <ligand>
        <name>Mn(2+)</name>
        <dbReference type="ChEBI" id="CHEBI:29035"/>
        <label>1</label>
    </ligand>
</feature>
<feature type="binding site" evidence="9">
    <location>
        <position position="55"/>
    </location>
    <ligand>
        <name>Mn(2+)</name>
        <dbReference type="ChEBI" id="CHEBI:29035"/>
        <label>2</label>
    </ligand>
</feature>
<feature type="binding site" evidence="9">
    <location>
        <position position="102"/>
    </location>
    <ligand>
        <name>Mn(2+)</name>
        <dbReference type="ChEBI" id="CHEBI:29035"/>
        <label>1</label>
    </ligand>
</feature>
<feature type="binding site" evidence="9">
    <location>
        <position position="102"/>
    </location>
    <ligand>
        <name>Mn(2+)</name>
        <dbReference type="ChEBI" id="CHEBI:29035"/>
        <label>2</label>
    </ligand>
</feature>
<reference key="1">
    <citation type="journal article" date="2015" name="Genome Announc.">
        <title>Draft Genome Sequence of Gulbenkiania mobilis Strain MB1, a Sulfur-Metabolizing Thermophile Isolated from a Hot Spring in Central India.</title>
        <authorList>
            <person name="Saxena R."/>
            <person name="Chaudhary N."/>
            <person name="Dhakan D.B."/>
            <person name="Sharma V.K."/>
        </authorList>
    </citation>
    <scope>NUCLEOTIDE SEQUENCE [LARGE SCALE GENOMIC DNA]</scope>
    <source>
        <strain>MB1</strain>
    </source>
</reference>
<reference key="2">
    <citation type="journal article" date="2021" name="Cell">
        <title>Cyclic CMP and cyclic UMP mediate bacterial immunity against phages.</title>
        <authorList>
            <person name="Tal N."/>
            <person name="Morehouse B.R."/>
            <person name="Millman A."/>
            <person name="Stokar-Avihail A."/>
            <person name="Avraham C."/>
            <person name="Fedorenko T."/>
            <person name="Yirmiya E."/>
            <person name="Herbst E."/>
            <person name="Brandis A."/>
            <person name="Mehlman T."/>
            <person name="Oppenheimer-Shaanan Y."/>
            <person name="Keszei A.F.A."/>
            <person name="Shao S."/>
            <person name="Amitai G."/>
            <person name="Kranzusch P.J."/>
            <person name="Sorek R."/>
        </authorList>
    </citation>
    <scope>FUNCTION</scope>
    <scope>CATALYTIC ACTIVITY</scope>
    <scope>CLASSIFICATION</scope>
    <source>
        <strain>MB1</strain>
    </source>
</reference>
<protein>
    <recommendedName>
        <fullName evidence="7">Uridylate cyclase</fullName>
        <ecNumber evidence="5">4.6.1.26</ecNumber>
    </recommendedName>
    <alternativeName>
        <fullName>Cyclic UMP synthase</fullName>
        <shortName evidence="7">cUMP synthase</shortName>
    </alternativeName>
    <alternativeName>
        <fullName evidence="7">GmPycC</fullName>
    </alternativeName>
</protein>